<name>RPOB_BURP0</name>
<proteinExistence type="inferred from homology"/>
<evidence type="ECO:0000255" key="1">
    <source>
        <dbReference type="HAMAP-Rule" id="MF_01321"/>
    </source>
</evidence>
<feature type="chain" id="PRO_0000300292" description="DNA-directed RNA polymerase subunit beta">
    <location>
        <begin position="1"/>
        <end position="1368"/>
    </location>
</feature>
<sequence length="1368" mass="153151">MQYSFTEKKRIRKSFAKRSIVHQVPFLLATQLESFSTFLQADVPTAQRKSEGLQAAFTSVFPIVSHNGFARLEFVSYALSSPAFNIKECQQRGLTYCSALRAKVRLVLLDKESPSKPVVKEVKEQEVYMGEIPLMTPTGSFVINGTERVIVSQLHRSPGVFFEHDKGKTHSSGKLLFSARIIPYRGSWLDFEFDPKDVLYFRVDRRRKMPVTILLKAIGLTPEQILANFFVFDNFTLMDEGAQMEFVPERLRGEVARFDITDREGKVIVQKDKRINAKHIRDLEAAKTKYISVPEDYLLGRVLAKNVVDGDTGEVIANANDEITEGVLEKLREAKIKEIQTLYTNDLDQGPYISSTLRVDETVDKTAARIAIYRMMRPGEPPTEEAVEALFNRLFYSEDAYDLSKVGRMKFNRRVGRDEITGPMTLQDDDILATIKILVELRNGKGEVDDIDHLGNRRVRCVGELAENQFRAGLVRVERAVKERLGQAESENLMPHDLINSKPISSAIREFFGSSQLSQFMDQTNPLSEITHKRRVSALGPGGLTRERAGFEVRDVHPTHYGRVCPIETPEGPNIGLINSLALYAHLNEYGFLETPYRKVVDSKVTDQIDYLSAIEEGRYMIAQANAAIGDDGALVDELVSSREAGETMMVTPDRIQYMDVAPSQIVSVAASLIPFLEHDDANRALMGSNMQRQAVPCLRPEKPVVGTGIERTVAVDSGTTVQALRGGVVDYVDAGRIVIRVNDDEAVAGEVGVDIYNLIKYTRSNQNTNINQRPIVKMGDKVSRGDVLADGASTDLGELALGQNMLIAFMPWNGYNFEDSILISERVVADDRYTSIHIEELNVVARDTKLGPEEITRDISNLAEVQLGRLDESGIVYIGAEVEAGDVLVGKVTPKGETQLTPEEKLLRAIFGEKASDVKDTSLRVPSGMSGTVIDVQVFTREGIQRDKRAQQIIDDELKRYRLDLNDQLRIVEGDAFQRLARMLVGKVANGGPKKLAKGTKIDQAYLEDLDHYHWFDIRLADDEAAVQLEAIKNSIEEKRHQFDLAFEEKRKKLTQGDELPPGVLKMVKVYLAVKRRLQPGDKMAGRHGNKGVVSKIVPVEDMPYMADGRPADVVLNPLGVPSRMNVGQVLEVHLGWAAKGLGWRIGEMLARQTKIEELRVFLTKIYNESGRAEDLESFSDDEILELAKNLREGVPFATPVFDGATEEEMSKMLDLAFPDDIAEQLDMNPSKNQVRLYDGRTGEPFERRVTVGYMHYLKLHHLVDDKMHARSTGPYSLVTQQPLGGKAQFGGQRFGEMEVWALEAYGASYVLQEMLTVKSDDVTGRTKVYENLVKGDHVIDAGMPESFNVLVKEIRSLGIDIDLDRN</sequence>
<accession>A3P0C5</accession>
<comment type="function">
    <text evidence="1">DNA-dependent RNA polymerase catalyzes the transcription of DNA into RNA using the four ribonucleoside triphosphates as substrates.</text>
</comment>
<comment type="catalytic activity">
    <reaction evidence="1">
        <text>RNA(n) + a ribonucleoside 5'-triphosphate = RNA(n+1) + diphosphate</text>
        <dbReference type="Rhea" id="RHEA:21248"/>
        <dbReference type="Rhea" id="RHEA-COMP:14527"/>
        <dbReference type="Rhea" id="RHEA-COMP:17342"/>
        <dbReference type="ChEBI" id="CHEBI:33019"/>
        <dbReference type="ChEBI" id="CHEBI:61557"/>
        <dbReference type="ChEBI" id="CHEBI:140395"/>
        <dbReference type="EC" id="2.7.7.6"/>
    </reaction>
</comment>
<comment type="subunit">
    <text evidence="1">The RNAP catalytic core consists of 2 alpha, 1 beta, 1 beta' and 1 omega subunit. When a sigma factor is associated with the core the holoenzyme is formed, which can initiate transcription.</text>
</comment>
<comment type="similarity">
    <text evidence="1">Belongs to the RNA polymerase beta chain family.</text>
</comment>
<dbReference type="EC" id="2.7.7.6" evidence="1"/>
<dbReference type="EMBL" id="CP000572">
    <property type="protein sequence ID" value="ABN91472.1"/>
    <property type="molecule type" value="Genomic_DNA"/>
</dbReference>
<dbReference type="RefSeq" id="WP_004198365.1">
    <property type="nucleotide sequence ID" value="NC_009076.1"/>
</dbReference>
<dbReference type="SMR" id="A3P0C5"/>
<dbReference type="GeneID" id="92980328"/>
<dbReference type="KEGG" id="bpl:BURPS1106A_3816"/>
<dbReference type="HOGENOM" id="CLU_000524_4_3_4"/>
<dbReference type="Proteomes" id="UP000006738">
    <property type="component" value="Chromosome I"/>
</dbReference>
<dbReference type="GO" id="GO:0000428">
    <property type="term" value="C:DNA-directed RNA polymerase complex"/>
    <property type="evidence" value="ECO:0007669"/>
    <property type="project" value="UniProtKB-KW"/>
</dbReference>
<dbReference type="GO" id="GO:0003677">
    <property type="term" value="F:DNA binding"/>
    <property type="evidence" value="ECO:0007669"/>
    <property type="project" value="UniProtKB-UniRule"/>
</dbReference>
<dbReference type="GO" id="GO:0003899">
    <property type="term" value="F:DNA-directed RNA polymerase activity"/>
    <property type="evidence" value="ECO:0007669"/>
    <property type="project" value="UniProtKB-UniRule"/>
</dbReference>
<dbReference type="GO" id="GO:0032549">
    <property type="term" value="F:ribonucleoside binding"/>
    <property type="evidence" value="ECO:0007669"/>
    <property type="project" value="InterPro"/>
</dbReference>
<dbReference type="GO" id="GO:0006351">
    <property type="term" value="P:DNA-templated transcription"/>
    <property type="evidence" value="ECO:0007669"/>
    <property type="project" value="UniProtKB-UniRule"/>
</dbReference>
<dbReference type="CDD" id="cd00653">
    <property type="entry name" value="RNA_pol_B_RPB2"/>
    <property type="match status" value="1"/>
</dbReference>
<dbReference type="FunFam" id="2.40.50.100:FF:000006">
    <property type="entry name" value="DNA-directed RNA polymerase subunit beta"/>
    <property type="match status" value="1"/>
</dbReference>
<dbReference type="FunFam" id="2.40.50.150:FF:000001">
    <property type="entry name" value="DNA-directed RNA polymerase subunit beta"/>
    <property type="match status" value="1"/>
</dbReference>
<dbReference type="FunFam" id="3.90.1110.10:FF:000004">
    <property type="entry name" value="DNA-directed RNA polymerase subunit beta"/>
    <property type="match status" value="1"/>
</dbReference>
<dbReference type="FunFam" id="3.90.1800.10:FF:000001">
    <property type="entry name" value="DNA-directed RNA polymerase subunit beta"/>
    <property type="match status" value="1"/>
</dbReference>
<dbReference type="Gene3D" id="2.40.50.100">
    <property type="match status" value="1"/>
</dbReference>
<dbReference type="Gene3D" id="2.40.50.150">
    <property type="match status" value="1"/>
</dbReference>
<dbReference type="Gene3D" id="3.90.1100.10">
    <property type="match status" value="2"/>
</dbReference>
<dbReference type="Gene3D" id="2.30.150.10">
    <property type="entry name" value="DNA-directed RNA polymerase, beta subunit, external 1 domain"/>
    <property type="match status" value="1"/>
</dbReference>
<dbReference type="Gene3D" id="2.40.270.10">
    <property type="entry name" value="DNA-directed RNA polymerase, subunit 2, domain 6"/>
    <property type="match status" value="2"/>
</dbReference>
<dbReference type="Gene3D" id="3.90.1800.10">
    <property type="entry name" value="RNA polymerase alpha subunit dimerisation domain"/>
    <property type="match status" value="1"/>
</dbReference>
<dbReference type="Gene3D" id="3.90.1110.10">
    <property type="entry name" value="RNA polymerase Rpb2, domain 2"/>
    <property type="match status" value="2"/>
</dbReference>
<dbReference type="HAMAP" id="MF_01321">
    <property type="entry name" value="RNApol_bact_RpoB"/>
    <property type="match status" value="1"/>
</dbReference>
<dbReference type="InterPro" id="IPR042107">
    <property type="entry name" value="DNA-dir_RNA_pol_bsu_ext_1_sf"/>
</dbReference>
<dbReference type="InterPro" id="IPR019462">
    <property type="entry name" value="DNA-dir_RNA_pol_bsu_external_1"/>
</dbReference>
<dbReference type="InterPro" id="IPR015712">
    <property type="entry name" value="DNA-dir_RNA_pol_su2"/>
</dbReference>
<dbReference type="InterPro" id="IPR007120">
    <property type="entry name" value="DNA-dir_RNAP_su2_dom"/>
</dbReference>
<dbReference type="InterPro" id="IPR037033">
    <property type="entry name" value="DNA-dir_RNAP_su2_hyb_sf"/>
</dbReference>
<dbReference type="InterPro" id="IPR010243">
    <property type="entry name" value="RNA_pol_bsu_bac"/>
</dbReference>
<dbReference type="InterPro" id="IPR007121">
    <property type="entry name" value="RNA_pol_bsu_CS"/>
</dbReference>
<dbReference type="InterPro" id="IPR007644">
    <property type="entry name" value="RNA_pol_bsu_protrusion"/>
</dbReference>
<dbReference type="InterPro" id="IPR007642">
    <property type="entry name" value="RNA_pol_Rpb2_2"/>
</dbReference>
<dbReference type="InterPro" id="IPR037034">
    <property type="entry name" value="RNA_pol_Rpb2_2_sf"/>
</dbReference>
<dbReference type="InterPro" id="IPR007645">
    <property type="entry name" value="RNA_pol_Rpb2_3"/>
</dbReference>
<dbReference type="InterPro" id="IPR007641">
    <property type="entry name" value="RNA_pol_Rpb2_7"/>
</dbReference>
<dbReference type="InterPro" id="IPR014724">
    <property type="entry name" value="RNA_pol_RPB2_OB-fold"/>
</dbReference>
<dbReference type="NCBIfam" id="NF001616">
    <property type="entry name" value="PRK00405.1"/>
    <property type="match status" value="1"/>
</dbReference>
<dbReference type="NCBIfam" id="TIGR02013">
    <property type="entry name" value="rpoB"/>
    <property type="match status" value="1"/>
</dbReference>
<dbReference type="PANTHER" id="PTHR20856">
    <property type="entry name" value="DNA-DIRECTED RNA POLYMERASE I SUBUNIT 2"/>
    <property type="match status" value="1"/>
</dbReference>
<dbReference type="Pfam" id="PF04563">
    <property type="entry name" value="RNA_pol_Rpb2_1"/>
    <property type="match status" value="1"/>
</dbReference>
<dbReference type="Pfam" id="PF04561">
    <property type="entry name" value="RNA_pol_Rpb2_2"/>
    <property type="match status" value="2"/>
</dbReference>
<dbReference type="Pfam" id="PF04565">
    <property type="entry name" value="RNA_pol_Rpb2_3"/>
    <property type="match status" value="1"/>
</dbReference>
<dbReference type="Pfam" id="PF10385">
    <property type="entry name" value="RNA_pol_Rpb2_45"/>
    <property type="match status" value="1"/>
</dbReference>
<dbReference type="Pfam" id="PF00562">
    <property type="entry name" value="RNA_pol_Rpb2_6"/>
    <property type="match status" value="1"/>
</dbReference>
<dbReference type="Pfam" id="PF04560">
    <property type="entry name" value="RNA_pol_Rpb2_7"/>
    <property type="match status" value="1"/>
</dbReference>
<dbReference type="SUPFAM" id="SSF64484">
    <property type="entry name" value="beta and beta-prime subunits of DNA dependent RNA-polymerase"/>
    <property type="match status" value="1"/>
</dbReference>
<dbReference type="PROSITE" id="PS01166">
    <property type="entry name" value="RNA_POL_BETA"/>
    <property type="match status" value="1"/>
</dbReference>
<gene>
    <name evidence="1" type="primary">rpoB</name>
    <name type="ordered locus">BURPS1106A_3816</name>
</gene>
<keyword id="KW-0240">DNA-directed RNA polymerase</keyword>
<keyword id="KW-0548">Nucleotidyltransferase</keyword>
<keyword id="KW-0804">Transcription</keyword>
<keyword id="KW-0808">Transferase</keyword>
<organism>
    <name type="scientific">Burkholderia pseudomallei (strain 1106a)</name>
    <dbReference type="NCBI Taxonomy" id="357348"/>
    <lineage>
        <taxon>Bacteria</taxon>
        <taxon>Pseudomonadati</taxon>
        <taxon>Pseudomonadota</taxon>
        <taxon>Betaproteobacteria</taxon>
        <taxon>Burkholderiales</taxon>
        <taxon>Burkholderiaceae</taxon>
        <taxon>Burkholderia</taxon>
        <taxon>pseudomallei group</taxon>
    </lineage>
</organism>
<protein>
    <recommendedName>
        <fullName evidence="1">DNA-directed RNA polymerase subunit beta</fullName>
        <shortName evidence="1">RNAP subunit beta</shortName>
        <ecNumber evidence="1">2.7.7.6</ecNumber>
    </recommendedName>
    <alternativeName>
        <fullName evidence="1">RNA polymerase subunit beta</fullName>
    </alternativeName>
    <alternativeName>
        <fullName evidence="1">Transcriptase subunit beta</fullName>
    </alternativeName>
</protein>
<reference key="1">
    <citation type="journal article" date="2010" name="Genome Biol. Evol.">
        <title>Continuing evolution of Burkholderia mallei through genome reduction and large-scale rearrangements.</title>
        <authorList>
            <person name="Losada L."/>
            <person name="Ronning C.M."/>
            <person name="DeShazer D."/>
            <person name="Woods D."/>
            <person name="Fedorova N."/>
            <person name="Kim H.S."/>
            <person name="Shabalina S.A."/>
            <person name="Pearson T.R."/>
            <person name="Brinkac L."/>
            <person name="Tan P."/>
            <person name="Nandi T."/>
            <person name="Crabtree J."/>
            <person name="Badger J."/>
            <person name="Beckstrom-Sternberg S."/>
            <person name="Saqib M."/>
            <person name="Schutzer S.E."/>
            <person name="Keim P."/>
            <person name="Nierman W.C."/>
        </authorList>
    </citation>
    <scope>NUCLEOTIDE SEQUENCE [LARGE SCALE GENOMIC DNA]</scope>
    <source>
        <strain>1106a</strain>
    </source>
</reference>